<accession>Q9KNY7</accession>
<proteinExistence type="inferred from homology"/>
<organism>
    <name type="scientific">Vibrio cholerae serotype O1 (strain ATCC 39315 / El Tor Inaba N16961)</name>
    <dbReference type="NCBI Taxonomy" id="243277"/>
    <lineage>
        <taxon>Bacteria</taxon>
        <taxon>Pseudomonadati</taxon>
        <taxon>Pseudomonadota</taxon>
        <taxon>Gammaproteobacteria</taxon>
        <taxon>Vibrionales</taxon>
        <taxon>Vibrionaceae</taxon>
        <taxon>Vibrio</taxon>
    </lineage>
</organism>
<evidence type="ECO:0000255" key="1">
    <source>
        <dbReference type="HAMAP-Rule" id="MF_01320"/>
    </source>
</evidence>
<evidence type="ECO:0000256" key="2">
    <source>
        <dbReference type="SAM" id="MobiDB-lite"/>
    </source>
</evidence>
<evidence type="ECO:0000305" key="3"/>
<comment type="function">
    <text evidence="1">One of the primary rRNA binding proteins. Required for association of the 30S and 50S subunits to form the 70S ribosome, for tRNA binding and peptide bond formation. It has been suggested to have peptidyltransferase activity; this is somewhat controversial. Makes several contacts with the 16S rRNA in the 70S ribosome.</text>
</comment>
<comment type="subunit">
    <text evidence="1">Part of the 50S ribosomal subunit. Forms a bridge to the 30S subunit in the 70S ribosome.</text>
</comment>
<comment type="similarity">
    <text evidence="1">Belongs to the universal ribosomal protein uL2 family.</text>
</comment>
<gene>
    <name evidence="1" type="primary">rplB</name>
    <name type="ordered locus">VC_2593</name>
</gene>
<dbReference type="EMBL" id="AE003852">
    <property type="protein sequence ID" value="AAF95734.1"/>
    <property type="molecule type" value="Genomic_DNA"/>
</dbReference>
<dbReference type="PIR" id="C82059">
    <property type="entry name" value="C82059"/>
</dbReference>
<dbReference type="RefSeq" id="NP_232221.1">
    <property type="nucleotide sequence ID" value="NC_002505.1"/>
</dbReference>
<dbReference type="RefSeq" id="WP_001018908.1">
    <property type="nucleotide sequence ID" value="NZ_LT906614.1"/>
</dbReference>
<dbReference type="SMR" id="Q9KNY7"/>
<dbReference type="STRING" id="243277.VC_2593"/>
<dbReference type="DNASU" id="2615610"/>
<dbReference type="EnsemblBacteria" id="AAF95734">
    <property type="protein sequence ID" value="AAF95734"/>
    <property type="gene ID" value="VC_2593"/>
</dbReference>
<dbReference type="GeneID" id="89513430"/>
<dbReference type="KEGG" id="vch:VC_2593"/>
<dbReference type="PATRIC" id="fig|243277.26.peg.2472"/>
<dbReference type="eggNOG" id="COG0090">
    <property type="taxonomic scope" value="Bacteria"/>
</dbReference>
<dbReference type="HOGENOM" id="CLU_036235_2_1_6"/>
<dbReference type="Proteomes" id="UP000000584">
    <property type="component" value="Chromosome 1"/>
</dbReference>
<dbReference type="GO" id="GO:0022625">
    <property type="term" value="C:cytosolic large ribosomal subunit"/>
    <property type="evidence" value="ECO:0000318"/>
    <property type="project" value="GO_Central"/>
</dbReference>
<dbReference type="GO" id="GO:0003723">
    <property type="term" value="F:RNA binding"/>
    <property type="evidence" value="ECO:0000318"/>
    <property type="project" value="GO_Central"/>
</dbReference>
<dbReference type="GO" id="GO:0019843">
    <property type="term" value="F:rRNA binding"/>
    <property type="evidence" value="ECO:0007669"/>
    <property type="project" value="UniProtKB-UniRule"/>
</dbReference>
<dbReference type="GO" id="GO:0003735">
    <property type="term" value="F:structural constituent of ribosome"/>
    <property type="evidence" value="ECO:0000318"/>
    <property type="project" value="GO_Central"/>
</dbReference>
<dbReference type="GO" id="GO:0016740">
    <property type="term" value="F:transferase activity"/>
    <property type="evidence" value="ECO:0007669"/>
    <property type="project" value="InterPro"/>
</dbReference>
<dbReference type="GO" id="GO:0002181">
    <property type="term" value="P:cytoplasmic translation"/>
    <property type="evidence" value="ECO:0000318"/>
    <property type="project" value="GO_Central"/>
</dbReference>
<dbReference type="FunFam" id="2.30.30.30:FF:000001">
    <property type="entry name" value="50S ribosomal protein L2"/>
    <property type="match status" value="1"/>
</dbReference>
<dbReference type="FunFam" id="2.40.50.140:FF:000003">
    <property type="entry name" value="50S ribosomal protein L2"/>
    <property type="match status" value="1"/>
</dbReference>
<dbReference type="FunFam" id="4.10.950.10:FF:000001">
    <property type="entry name" value="50S ribosomal protein L2"/>
    <property type="match status" value="1"/>
</dbReference>
<dbReference type="Gene3D" id="2.30.30.30">
    <property type="match status" value="1"/>
</dbReference>
<dbReference type="Gene3D" id="2.40.50.140">
    <property type="entry name" value="Nucleic acid-binding proteins"/>
    <property type="match status" value="1"/>
</dbReference>
<dbReference type="Gene3D" id="4.10.950.10">
    <property type="entry name" value="Ribosomal protein L2, domain 3"/>
    <property type="match status" value="1"/>
</dbReference>
<dbReference type="HAMAP" id="MF_01320_B">
    <property type="entry name" value="Ribosomal_uL2_B"/>
    <property type="match status" value="1"/>
</dbReference>
<dbReference type="InterPro" id="IPR012340">
    <property type="entry name" value="NA-bd_OB-fold"/>
</dbReference>
<dbReference type="InterPro" id="IPR014722">
    <property type="entry name" value="Rib_uL2_dom2"/>
</dbReference>
<dbReference type="InterPro" id="IPR002171">
    <property type="entry name" value="Ribosomal_uL2"/>
</dbReference>
<dbReference type="InterPro" id="IPR005880">
    <property type="entry name" value="Ribosomal_uL2_bac/org-type"/>
</dbReference>
<dbReference type="InterPro" id="IPR022669">
    <property type="entry name" value="Ribosomal_uL2_C"/>
</dbReference>
<dbReference type="InterPro" id="IPR022671">
    <property type="entry name" value="Ribosomal_uL2_CS"/>
</dbReference>
<dbReference type="InterPro" id="IPR014726">
    <property type="entry name" value="Ribosomal_uL2_dom3"/>
</dbReference>
<dbReference type="InterPro" id="IPR022666">
    <property type="entry name" value="Ribosomal_uL2_RNA-bd_dom"/>
</dbReference>
<dbReference type="InterPro" id="IPR008991">
    <property type="entry name" value="Translation_prot_SH3-like_sf"/>
</dbReference>
<dbReference type="NCBIfam" id="TIGR01171">
    <property type="entry name" value="rplB_bact"/>
    <property type="match status" value="1"/>
</dbReference>
<dbReference type="PANTHER" id="PTHR13691:SF5">
    <property type="entry name" value="LARGE RIBOSOMAL SUBUNIT PROTEIN UL2M"/>
    <property type="match status" value="1"/>
</dbReference>
<dbReference type="PANTHER" id="PTHR13691">
    <property type="entry name" value="RIBOSOMAL PROTEIN L2"/>
    <property type="match status" value="1"/>
</dbReference>
<dbReference type="Pfam" id="PF00181">
    <property type="entry name" value="Ribosomal_L2"/>
    <property type="match status" value="1"/>
</dbReference>
<dbReference type="Pfam" id="PF03947">
    <property type="entry name" value="Ribosomal_L2_C"/>
    <property type="match status" value="1"/>
</dbReference>
<dbReference type="PIRSF" id="PIRSF002158">
    <property type="entry name" value="Ribosomal_L2"/>
    <property type="match status" value="1"/>
</dbReference>
<dbReference type="SMART" id="SM01383">
    <property type="entry name" value="Ribosomal_L2"/>
    <property type="match status" value="1"/>
</dbReference>
<dbReference type="SMART" id="SM01382">
    <property type="entry name" value="Ribosomal_L2_C"/>
    <property type="match status" value="1"/>
</dbReference>
<dbReference type="SUPFAM" id="SSF50249">
    <property type="entry name" value="Nucleic acid-binding proteins"/>
    <property type="match status" value="1"/>
</dbReference>
<dbReference type="SUPFAM" id="SSF50104">
    <property type="entry name" value="Translation proteins SH3-like domain"/>
    <property type="match status" value="1"/>
</dbReference>
<dbReference type="PROSITE" id="PS00467">
    <property type="entry name" value="RIBOSOMAL_L2"/>
    <property type="match status" value="1"/>
</dbReference>
<name>RL2_VIBCH</name>
<keyword id="KW-1185">Reference proteome</keyword>
<keyword id="KW-0687">Ribonucleoprotein</keyword>
<keyword id="KW-0689">Ribosomal protein</keyword>
<keyword id="KW-0694">RNA-binding</keyword>
<keyword id="KW-0699">rRNA-binding</keyword>
<feature type="chain" id="PRO_0000129647" description="Large ribosomal subunit protein uL2">
    <location>
        <begin position="1"/>
        <end position="274"/>
    </location>
</feature>
<feature type="region of interest" description="Disordered" evidence="2">
    <location>
        <begin position="223"/>
        <end position="274"/>
    </location>
</feature>
<protein>
    <recommendedName>
        <fullName evidence="1">Large ribosomal subunit protein uL2</fullName>
    </recommendedName>
    <alternativeName>
        <fullName evidence="3">50S ribosomal protein L2</fullName>
    </alternativeName>
</protein>
<sequence>MAIVKCKPTSAGRRHVVKVVNADLHKGKPYAPLLEKNSKNGGRNNNGRITVRHIGGGHKQHYRLVDFKRTKDGIPAKVERLEYDPNRSANIALVLYADGERRYIIAPKGLQAGDVIQSGPDAPIKAGNAMPMRNIPVGSTIHNVELTPGKGAQLARSAGAYAQLVARDGAYVTLRLRSGEMRKVLSEGRATIGEVGNAEHMLRELGKAGAARWRGVRPTVRGVVMNPVDHPHGGGEGRTSGGRHPVSPWGVPTKGYKTRSNKRTDKYIVRRRNK</sequence>
<reference key="1">
    <citation type="journal article" date="2000" name="Nature">
        <title>DNA sequence of both chromosomes of the cholera pathogen Vibrio cholerae.</title>
        <authorList>
            <person name="Heidelberg J.F."/>
            <person name="Eisen J.A."/>
            <person name="Nelson W.C."/>
            <person name="Clayton R.A."/>
            <person name="Gwinn M.L."/>
            <person name="Dodson R.J."/>
            <person name="Haft D.H."/>
            <person name="Hickey E.K."/>
            <person name="Peterson J.D."/>
            <person name="Umayam L.A."/>
            <person name="Gill S.R."/>
            <person name="Nelson K.E."/>
            <person name="Read T.D."/>
            <person name="Tettelin H."/>
            <person name="Richardson D.L."/>
            <person name="Ermolaeva M.D."/>
            <person name="Vamathevan J.J."/>
            <person name="Bass S."/>
            <person name="Qin H."/>
            <person name="Dragoi I."/>
            <person name="Sellers P."/>
            <person name="McDonald L.A."/>
            <person name="Utterback T.R."/>
            <person name="Fleischmann R.D."/>
            <person name="Nierman W.C."/>
            <person name="White O."/>
            <person name="Salzberg S.L."/>
            <person name="Smith H.O."/>
            <person name="Colwell R.R."/>
            <person name="Mekalanos J.J."/>
            <person name="Venter J.C."/>
            <person name="Fraser C.M."/>
        </authorList>
    </citation>
    <scope>NUCLEOTIDE SEQUENCE [LARGE SCALE GENOMIC DNA]</scope>
    <source>
        <strain>ATCC 39315 / El Tor Inaba N16961</strain>
    </source>
</reference>